<proteinExistence type="evidence at protein level"/>
<feature type="chain" id="PRO_0000388756" description="Pre-mRNA-splicing factor RBM22 homolog">
    <location>
        <begin position="1"/>
        <end position="357"/>
    </location>
</feature>
<feature type="domain" description="RRM" evidence="4">
    <location>
        <begin position="222"/>
        <end position="295"/>
    </location>
</feature>
<feature type="zinc finger region" description="C3H1-type" evidence="5">
    <location>
        <begin position="153"/>
        <end position="180"/>
    </location>
</feature>
<accession>Q8I4V2</accession>
<accession>A0A144A0M5</accession>
<evidence type="ECO:0000250" key="1"/>
<evidence type="ECO:0000250" key="2">
    <source>
        <dbReference type="UniProtKB" id="P38241"/>
    </source>
</evidence>
<evidence type="ECO:0000255" key="3"/>
<evidence type="ECO:0000255" key="4">
    <source>
        <dbReference type="PROSITE-ProRule" id="PRU00176"/>
    </source>
</evidence>
<evidence type="ECO:0000255" key="5">
    <source>
        <dbReference type="PROSITE-ProRule" id="PRU00723"/>
    </source>
</evidence>
<evidence type="ECO:0000269" key="6">
    <source>
    </source>
</evidence>
<evidence type="ECO:0000305" key="7"/>
<sequence length="357" mass="41968">MDRYGHNVRSDIKKQGYEDSNLPILCETCLGENPYVRIIREENGKECKICKNVFTHFRWKPGENSRYKQTVICMKCAKVKNVCQTCLFDLQYNLPVQVRDKFLENSIVLPENETNRNFFLEQMENDMSSTYDKMNRINMDLSKLKRRDPYFKRNMARVCSFWRKNSCNRGDECPYLHKEIHLDKSLSNQNIKNRYTGENDILAEKILLKHNEKNNDDKNMSNKICIQGISESVSQANIKECFKKFGDIKSIKVIPKDSKMFISYSNSQAAKKASDKYKDGLLLNGCNLTVHLQDNPTYNNKNQQPVINYMNNNMYQNNMSPQMMYNPMYYPYYNMNNMHPSSAPYSSMLPSEAEQRK</sequence>
<gene>
    <name evidence="7" type="primary">RBM22</name>
    <name type="ORF">PF3D7_1248200</name>
    <name type="ORF">PFL2310w</name>
</gene>
<comment type="function">
    <text evidence="2">Involved in pre-mRNA splicing (By similarity). Binds RNA (By similarity).</text>
</comment>
<comment type="subunit">
    <text evidence="2">Probable component of the spliceosome C complex.</text>
</comment>
<comment type="subcellular location">
    <subcellularLocation>
        <location evidence="2">Nucleus</location>
    </subcellularLocation>
</comment>
<comment type="domain">
    <text evidence="1">The C-terminal RRM domain and the zinc finger motif are necessary for RNA-binding.</text>
</comment>
<comment type="biotechnology">
    <text evidence="6">Possible candidate for an effective malaria vaccine as determined by epitope response in sera.</text>
</comment>
<comment type="similarity">
    <text evidence="3">Belongs to the SLT11 family.</text>
</comment>
<reference key="1">
    <citation type="journal article" date="2002" name="Nature">
        <title>Genome sequence of the human malaria parasite Plasmodium falciparum.</title>
        <authorList>
            <person name="Gardner M.J."/>
            <person name="Hall N."/>
            <person name="Fung E."/>
            <person name="White O."/>
            <person name="Berriman M."/>
            <person name="Hyman R.W."/>
            <person name="Carlton J.M."/>
            <person name="Pain A."/>
            <person name="Nelson K.E."/>
            <person name="Bowman S."/>
            <person name="Paulsen I.T."/>
            <person name="James K.D."/>
            <person name="Eisen J.A."/>
            <person name="Rutherford K.M."/>
            <person name="Salzberg S.L."/>
            <person name="Craig A."/>
            <person name="Kyes S."/>
            <person name="Chan M.-S."/>
            <person name="Nene V."/>
            <person name="Shallom S.J."/>
            <person name="Suh B."/>
            <person name="Peterson J."/>
            <person name="Angiuoli S."/>
            <person name="Pertea M."/>
            <person name="Allen J."/>
            <person name="Selengut J."/>
            <person name="Haft D."/>
            <person name="Mather M.W."/>
            <person name="Vaidya A.B."/>
            <person name="Martin D.M.A."/>
            <person name="Fairlamb A.H."/>
            <person name="Fraunholz M.J."/>
            <person name="Roos D.S."/>
            <person name="Ralph S.A."/>
            <person name="McFadden G.I."/>
            <person name="Cummings L.M."/>
            <person name="Subramanian G.M."/>
            <person name="Mungall C."/>
            <person name="Venter J.C."/>
            <person name="Carucci D.J."/>
            <person name="Hoffman S.L."/>
            <person name="Newbold C."/>
            <person name="Davis R.W."/>
            <person name="Fraser C.M."/>
            <person name="Barrell B.G."/>
        </authorList>
    </citation>
    <scope>NUCLEOTIDE SEQUENCE [LARGE SCALE GENOMIC DNA]</scope>
    <source>
        <strain>3D7</strain>
    </source>
</reference>
<reference evidence="7" key="2">
    <citation type="journal article" date="2007" name="PLoS ONE">
        <title>Rapid identification of malaria vaccine candidates based on alpha-helical coiled coil protein motif.</title>
        <authorList>
            <person name="Villard V."/>
            <person name="Agak G.W."/>
            <person name="Frank G."/>
            <person name="Jafarshad A."/>
            <person name="Servis C."/>
            <person name="Nebie I."/>
            <person name="Sirima S.B."/>
            <person name="Felger I."/>
            <person name="Arevalo-Herrera M."/>
            <person name="Herrera S."/>
            <person name="Heitz F."/>
            <person name="Baecker V."/>
            <person name="Druilhe P."/>
            <person name="Kajava A.V."/>
            <person name="Corradin G."/>
        </authorList>
    </citation>
    <scope>SYNTHESIS OF 117-146</scope>
    <scope>POSSIBLE CANDIDATE MALARIA EPITOPE</scope>
</reference>
<organism>
    <name type="scientific">Plasmodium falciparum (isolate 3D7)</name>
    <dbReference type="NCBI Taxonomy" id="36329"/>
    <lineage>
        <taxon>Eukaryota</taxon>
        <taxon>Sar</taxon>
        <taxon>Alveolata</taxon>
        <taxon>Apicomplexa</taxon>
        <taxon>Aconoidasida</taxon>
        <taxon>Haemosporida</taxon>
        <taxon>Plasmodiidae</taxon>
        <taxon>Plasmodium</taxon>
        <taxon>Plasmodium (Laverania)</taxon>
    </lineage>
</organism>
<protein>
    <recommendedName>
        <fullName>Pre-mRNA-splicing factor RBM22 homolog</fullName>
    </recommendedName>
</protein>
<keyword id="KW-0477">Merozoite</keyword>
<keyword id="KW-0479">Metal-binding</keyword>
<keyword id="KW-0507">mRNA processing</keyword>
<keyword id="KW-0508">mRNA splicing</keyword>
<keyword id="KW-0539">Nucleus</keyword>
<keyword id="KW-1185">Reference proteome</keyword>
<keyword id="KW-0694">RNA-binding</keyword>
<keyword id="KW-0747">Spliceosome</keyword>
<keyword id="KW-0862">Zinc</keyword>
<keyword id="KW-0863">Zinc-finger</keyword>
<name>RBM22_PLAF7</name>
<dbReference type="EMBL" id="LN999947">
    <property type="protein sequence ID" value="CZT99637.1"/>
    <property type="molecule type" value="Genomic_DNA"/>
</dbReference>
<dbReference type="RefSeq" id="XP_001350866.1">
    <property type="nucleotide sequence ID" value="XM_001350830.2"/>
</dbReference>
<dbReference type="SMR" id="Q8I4V2"/>
<dbReference type="FunCoup" id="Q8I4V2">
    <property type="interactions" value="584"/>
</dbReference>
<dbReference type="STRING" id="36329.Q8I4V2"/>
<dbReference type="PaxDb" id="5833-PFL2310w"/>
<dbReference type="EnsemblProtists" id="CZT99637">
    <property type="protein sequence ID" value="CZT99637"/>
    <property type="gene ID" value="PF3D7_1248200"/>
</dbReference>
<dbReference type="GeneID" id="811514"/>
<dbReference type="KEGG" id="pfa:PF3D7_1248200"/>
<dbReference type="VEuPathDB" id="PlasmoDB:PF3D7_1248200"/>
<dbReference type="HOGENOM" id="CLU_027112_0_0_1"/>
<dbReference type="InParanoid" id="Q8I4V2"/>
<dbReference type="OMA" id="CPLRVQW"/>
<dbReference type="OrthoDB" id="10259600at2759"/>
<dbReference type="PhylomeDB" id="Q8I4V2"/>
<dbReference type="Reactome" id="R-PFA-72163">
    <property type="pathway name" value="mRNA Splicing - Major Pathway"/>
</dbReference>
<dbReference type="Proteomes" id="UP000001450">
    <property type="component" value="Chromosome 12"/>
</dbReference>
<dbReference type="GO" id="GO:0000974">
    <property type="term" value="C:Prp19 complex"/>
    <property type="evidence" value="ECO:0000318"/>
    <property type="project" value="GO_Central"/>
</dbReference>
<dbReference type="GO" id="GO:0071006">
    <property type="term" value="C:U2-type catalytic step 1 spliceosome"/>
    <property type="evidence" value="ECO:0000318"/>
    <property type="project" value="GO_Central"/>
</dbReference>
<dbReference type="GO" id="GO:0071007">
    <property type="term" value="C:U2-type catalytic step 2 spliceosome"/>
    <property type="evidence" value="ECO:0000318"/>
    <property type="project" value="GO_Central"/>
</dbReference>
<dbReference type="GO" id="GO:0036002">
    <property type="term" value="F:pre-mRNA binding"/>
    <property type="evidence" value="ECO:0000318"/>
    <property type="project" value="GO_Central"/>
</dbReference>
<dbReference type="GO" id="GO:0017070">
    <property type="term" value="F:U6 snRNA binding"/>
    <property type="evidence" value="ECO:0000318"/>
    <property type="project" value="GO_Central"/>
</dbReference>
<dbReference type="GO" id="GO:0008270">
    <property type="term" value="F:zinc ion binding"/>
    <property type="evidence" value="ECO:0007669"/>
    <property type="project" value="UniProtKB-KW"/>
</dbReference>
<dbReference type="GO" id="GO:0006397">
    <property type="term" value="P:mRNA processing"/>
    <property type="evidence" value="ECO:0007669"/>
    <property type="project" value="UniProtKB-KW"/>
</dbReference>
<dbReference type="GO" id="GO:0008380">
    <property type="term" value="P:RNA splicing"/>
    <property type="evidence" value="ECO:0007669"/>
    <property type="project" value="UniProtKB-KW"/>
</dbReference>
<dbReference type="CDD" id="cd12292">
    <property type="entry name" value="RRM2_La_like"/>
    <property type="match status" value="1"/>
</dbReference>
<dbReference type="FunFam" id="3.30.70.330:FF:000660">
    <property type="entry name" value="Pre-mRNA-splicing factor"/>
    <property type="match status" value="1"/>
</dbReference>
<dbReference type="Gene3D" id="3.30.1370.210">
    <property type="match status" value="1"/>
</dbReference>
<dbReference type="Gene3D" id="3.30.70.330">
    <property type="match status" value="1"/>
</dbReference>
<dbReference type="InterPro" id="IPR039171">
    <property type="entry name" value="Cwc2/Slt11"/>
</dbReference>
<dbReference type="InterPro" id="IPR012677">
    <property type="entry name" value="Nucleotide-bd_a/b_plait_sf"/>
</dbReference>
<dbReference type="InterPro" id="IPR035979">
    <property type="entry name" value="RBD_domain_sf"/>
</dbReference>
<dbReference type="InterPro" id="IPR000504">
    <property type="entry name" value="RRM_dom"/>
</dbReference>
<dbReference type="InterPro" id="IPR048995">
    <property type="entry name" value="STL11/RBM22-like_N"/>
</dbReference>
<dbReference type="InterPro" id="IPR000571">
    <property type="entry name" value="Znf_CCCH"/>
</dbReference>
<dbReference type="InterPro" id="IPR036855">
    <property type="entry name" value="Znf_CCCH_sf"/>
</dbReference>
<dbReference type="PANTHER" id="PTHR14089">
    <property type="entry name" value="PRE-MRNA-SPLICING FACTOR RBM22"/>
    <property type="match status" value="1"/>
</dbReference>
<dbReference type="PANTHER" id="PTHR14089:SF6">
    <property type="entry name" value="PRE-MRNA-SPLICING FACTOR RBM22"/>
    <property type="match status" value="1"/>
</dbReference>
<dbReference type="Pfam" id="PF00076">
    <property type="entry name" value="RRM_1"/>
    <property type="match status" value="1"/>
</dbReference>
<dbReference type="Pfam" id="PF21369">
    <property type="entry name" value="STL11_N"/>
    <property type="match status" value="1"/>
</dbReference>
<dbReference type="Pfam" id="PF00642">
    <property type="entry name" value="zf-CCCH"/>
    <property type="match status" value="1"/>
</dbReference>
<dbReference type="SMART" id="SM00360">
    <property type="entry name" value="RRM"/>
    <property type="match status" value="1"/>
</dbReference>
<dbReference type="SMART" id="SM00356">
    <property type="entry name" value="ZnF_C3H1"/>
    <property type="match status" value="1"/>
</dbReference>
<dbReference type="SUPFAM" id="SSF90229">
    <property type="entry name" value="CCCH zinc finger"/>
    <property type="match status" value="1"/>
</dbReference>
<dbReference type="SUPFAM" id="SSF54928">
    <property type="entry name" value="RNA-binding domain, RBD"/>
    <property type="match status" value="1"/>
</dbReference>
<dbReference type="PROSITE" id="PS50102">
    <property type="entry name" value="RRM"/>
    <property type="match status" value="1"/>
</dbReference>
<dbReference type="PROSITE" id="PS50103">
    <property type="entry name" value="ZF_C3H1"/>
    <property type="match status" value="1"/>
</dbReference>